<protein>
    <recommendedName>
        <fullName evidence="1">Glycine--tRNA ligase alpha subunit</fullName>
        <ecNumber evidence="1">6.1.1.14</ecNumber>
    </recommendedName>
    <alternativeName>
        <fullName evidence="1">Glycyl-tRNA synthetase alpha subunit</fullName>
        <shortName evidence="1">GlyRS</shortName>
    </alternativeName>
</protein>
<feature type="chain" id="PRO_1000078527" description="Glycine--tRNA ligase alpha subunit">
    <location>
        <begin position="1"/>
        <end position="291"/>
    </location>
</feature>
<name>SYGA_GEOUR</name>
<proteinExistence type="inferred from homology"/>
<sequence>MTFQDLILSLQGYWAKQGCVIQQPYDCEKGAGTFNPATFLRVLGPEPWNVAYVEPSRRPTDGRYGENPNRLQHYYQFQVIMKPSPMNILDLYLDSLRSFGINPNQHDIRFVEDDWESPTLGAWGLGWEVWLDGMEITQFTYFQQAGGIDLKPVSSEITYGCERIAMYLQGVDNVYDLEWVKGVRYGDIHHESEVEFSTYNFEEADVEMLLQLFGMYEKECVRLVEKGLVLPAYDYVMKCSHTFNLLDARGAISVTERASYIGKVRNVAKLCAEGYLQMRERLGFPLLKGGR</sequence>
<comment type="catalytic activity">
    <reaction evidence="1">
        <text>tRNA(Gly) + glycine + ATP = glycyl-tRNA(Gly) + AMP + diphosphate</text>
        <dbReference type="Rhea" id="RHEA:16013"/>
        <dbReference type="Rhea" id="RHEA-COMP:9664"/>
        <dbReference type="Rhea" id="RHEA-COMP:9683"/>
        <dbReference type="ChEBI" id="CHEBI:30616"/>
        <dbReference type="ChEBI" id="CHEBI:33019"/>
        <dbReference type="ChEBI" id="CHEBI:57305"/>
        <dbReference type="ChEBI" id="CHEBI:78442"/>
        <dbReference type="ChEBI" id="CHEBI:78522"/>
        <dbReference type="ChEBI" id="CHEBI:456215"/>
        <dbReference type="EC" id="6.1.1.14"/>
    </reaction>
</comment>
<comment type="subunit">
    <text evidence="1">Tetramer of two alpha and two beta subunits.</text>
</comment>
<comment type="subcellular location">
    <subcellularLocation>
        <location evidence="1">Cytoplasm</location>
    </subcellularLocation>
</comment>
<comment type="similarity">
    <text evidence="1">Belongs to the class-II aminoacyl-tRNA synthetase family.</text>
</comment>
<evidence type="ECO:0000255" key="1">
    <source>
        <dbReference type="HAMAP-Rule" id="MF_00254"/>
    </source>
</evidence>
<gene>
    <name evidence="1" type="primary">glyQ</name>
    <name type="ordered locus">Gura_3673</name>
</gene>
<dbReference type="EC" id="6.1.1.14" evidence="1"/>
<dbReference type="EMBL" id="CP000698">
    <property type="protein sequence ID" value="ABQ27826.1"/>
    <property type="molecule type" value="Genomic_DNA"/>
</dbReference>
<dbReference type="RefSeq" id="WP_011940479.1">
    <property type="nucleotide sequence ID" value="NC_009483.1"/>
</dbReference>
<dbReference type="SMR" id="A5G7Q8"/>
<dbReference type="STRING" id="351605.Gura_3673"/>
<dbReference type="KEGG" id="gur:Gura_3673"/>
<dbReference type="HOGENOM" id="CLU_057066_1_0_7"/>
<dbReference type="OrthoDB" id="9802183at2"/>
<dbReference type="Proteomes" id="UP000006695">
    <property type="component" value="Chromosome"/>
</dbReference>
<dbReference type="GO" id="GO:0005829">
    <property type="term" value="C:cytosol"/>
    <property type="evidence" value="ECO:0007669"/>
    <property type="project" value="TreeGrafter"/>
</dbReference>
<dbReference type="GO" id="GO:0005524">
    <property type="term" value="F:ATP binding"/>
    <property type="evidence" value="ECO:0007669"/>
    <property type="project" value="UniProtKB-UniRule"/>
</dbReference>
<dbReference type="GO" id="GO:0004820">
    <property type="term" value="F:glycine-tRNA ligase activity"/>
    <property type="evidence" value="ECO:0007669"/>
    <property type="project" value="UniProtKB-UniRule"/>
</dbReference>
<dbReference type="GO" id="GO:0006426">
    <property type="term" value="P:glycyl-tRNA aminoacylation"/>
    <property type="evidence" value="ECO:0007669"/>
    <property type="project" value="UniProtKB-UniRule"/>
</dbReference>
<dbReference type="CDD" id="cd00733">
    <property type="entry name" value="GlyRS_alpha_core"/>
    <property type="match status" value="1"/>
</dbReference>
<dbReference type="FunFam" id="3.30.930.10:FF:000006">
    <property type="entry name" value="Glycine--tRNA ligase alpha subunit"/>
    <property type="match status" value="1"/>
</dbReference>
<dbReference type="Gene3D" id="3.30.930.10">
    <property type="entry name" value="Bira Bifunctional Protein, Domain 2"/>
    <property type="match status" value="1"/>
</dbReference>
<dbReference type="Gene3D" id="1.20.58.180">
    <property type="entry name" value="Class II aaRS and biotin synthetases, domain 2"/>
    <property type="match status" value="1"/>
</dbReference>
<dbReference type="HAMAP" id="MF_00254">
    <property type="entry name" value="Gly_tRNA_synth_alpha"/>
    <property type="match status" value="1"/>
</dbReference>
<dbReference type="InterPro" id="IPR045864">
    <property type="entry name" value="aa-tRNA-synth_II/BPL/LPL"/>
</dbReference>
<dbReference type="InterPro" id="IPR006194">
    <property type="entry name" value="Gly-tRNA-synth_heterodimer"/>
</dbReference>
<dbReference type="InterPro" id="IPR002310">
    <property type="entry name" value="Gly-tRNA_ligase_asu"/>
</dbReference>
<dbReference type="NCBIfam" id="TIGR00388">
    <property type="entry name" value="glyQ"/>
    <property type="match status" value="1"/>
</dbReference>
<dbReference type="NCBIfam" id="NF006827">
    <property type="entry name" value="PRK09348.1"/>
    <property type="match status" value="1"/>
</dbReference>
<dbReference type="PANTHER" id="PTHR30075:SF2">
    <property type="entry name" value="GLYCINE--TRNA LIGASE, CHLOROPLASTIC_MITOCHONDRIAL 2"/>
    <property type="match status" value="1"/>
</dbReference>
<dbReference type="PANTHER" id="PTHR30075">
    <property type="entry name" value="GLYCYL-TRNA SYNTHETASE"/>
    <property type="match status" value="1"/>
</dbReference>
<dbReference type="Pfam" id="PF02091">
    <property type="entry name" value="tRNA-synt_2e"/>
    <property type="match status" value="1"/>
</dbReference>
<dbReference type="PRINTS" id="PR01044">
    <property type="entry name" value="TRNASYNTHGA"/>
</dbReference>
<dbReference type="SUPFAM" id="SSF55681">
    <property type="entry name" value="Class II aaRS and biotin synthetases"/>
    <property type="match status" value="1"/>
</dbReference>
<dbReference type="PROSITE" id="PS50861">
    <property type="entry name" value="AA_TRNA_LIGASE_II_GLYAB"/>
    <property type="match status" value="1"/>
</dbReference>
<reference key="1">
    <citation type="submission" date="2007-05" db="EMBL/GenBank/DDBJ databases">
        <title>Complete sequence of Geobacter uraniireducens Rf4.</title>
        <authorList>
            <consortium name="US DOE Joint Genome Institute"/>
            <person name="Copeland A."/>
            <person name="Lucas S."/>
            <person name="Lapidus A."/>
            <person name="Barry K."/>
            <person name="Detter J.C."/>
            <person name="Glavina del Rio T."/>
            <person name="Hammon N."/>
            <person name="Israni S."/>
            <person name="Dalin E."/>
            <person name="Tice H."/>
            <person name="Pitluck S."/>
            <person name="Chertkov O."/>
            <person name="Brettin T."/>
            <person name="Bruce D."/>
            <person name="Han C."/>
            <person name="Schmutz J."/>
            <person name="Larimer F."/>
            <person name="Land M."/>
            <person name="Hauser L."/>
            <person name="Kyrpides N."/>
            <person name="Mikhailova N."/>
            <person name="Shelobolina E."/>
            <person name="Aklujkar M."/>
            <person name="Lovley D."/>
            <person name="Richardson P."/>
        </authorList>
    </citation>
    <scope>NUCLEOTIDE SEQUENCE [LARGE SCALE GENOMIC DNA]</scope>
    <source>
        <strain>ATCC BAA-1134 / JCM 13001 / Rf4</strain>
    </source>
</reference>
<accession>A5G7Q8</accession>
<keyword id="KW-0030">Aminoacyl-tRNA synthetase</keyword>
<keyword id="KW-0067">ATP-binding</keyword>
<keyword id="KW-0963">Cytoplasm</keyword>
<keyword id="KW-0436">Ligase</keyword>
<keyword id="KW-0547">Nucleotide-binding</keyword>
<keyword id="KW-0648">Protein biosynthesis</keyword>
<keyword id="KW-1185">Reference proteome</keyword>
<organism>
    <name type="scientific">Geotalea uraniireducens (strain Rf4)</name>
    <name type="common">Geobacter uraniireducens</name>
    <dbReference type="NCBI Taxonomy" id="351605"/>
    <lineage>
        <taxon>Bacteria</taxon>
        <taxon>Pseudomonadati</taxon>
        <taxon>Thermodesulfobacteriota</taxon>
        <taxon>Desulfuromonadia</taxon>
        <taxon>Geobacterales</taxon>
        <taxon>Geobacteraceae</taxon>
        <taxon>Geotalea</taxon>
    </lineage>
</organism>